<evidence type="ECO:0000255" key="1">
    <source>
        <dbReference type="HAMAP-Rule" id="MF_00501"/>
    </source>
</evidence>
<evidence type="ECO:0000305" key="2"/>
<dbReference type="EMBL" id="AE016828">
    <property type="protein sequence ID" value="AAO90434.1"/>
    <property type="molecule type" value="Genomic_DNA"/>
</dbReference>
<dbReference type="RefSeq" id="NP_819920.1">
    <property type="nucleotide sequence ID" value="NC_002971.4"/>
</dbReference>
<dbReference type="RefSeq" id="WP_005768737.1">
    <property type="nucleotide sequence ID" value="NZ_CDBG01000001.1"/>
</dbReference>
<dbReference type="SMR" id="Q83D39"/>
<dbReference type="STRING" id="227377.CBU_0905"/>
<dbReference type="EnsemblBacteria" id="AAO90434">
    <property type="protein sequence ID" value="AAO90434"/>
    <property type="gene ID" value="CBU_0905"/>
</dbReference>
<dbReference type="GeneID" id="1208798"/>
<dbReference type="KEGG" id="cbu:CBU_0905"/>
<dbReference type="PATRIC" id="fig|227377.7.peg.892"/>
<dbReference type="eggNOG" id="COG0254">
    <property type="taxonomic scope" value="Bacteria"/>
</dbReference>
<dbReference type="HOGENOM" id="CLU_114306_4_0_6"/>
<dbReference type="OrthoDB" id="9803251at2"/>
<dbReference type="Proteomes" id="UP000002671">
    <property type="component" value="Chromosome"/>
</dbReference>
<dbReference type="GO" id="GO:1990904">
    <property type="term" value="C:ribonucleoprotein complex"/>
    <property type="evidence" value="ECO:0007669"/>
    <property type="project" value="UniProtKB-KW"/>
</dbReference>
<dbReference type="GO" id="GO:0005840">
    <property type="term" value="C:ribosome"/>
    <property type="evidence" value="ECO:0007669"/>
    <property type="project" value="UniProtKB-KW"/>
</dbReference>
<dbReference type="GO" id="GO:0046872">
    <property type="term" value="F:metal ion binding"/>
    <property type="evidence" value="ECO:0007669"/>
    <property type="project" value="UniProtKB-KW"/>
</dbReference>
<dbReference type="GO" id="GO:0019843">
    <property type="term" value="F:rRNA binding"/>
    <property type="evidence" value="ECO:0007669"/>
    <property type="project" value="UniProtKB-KW"/>
</dbReference>
<dbReference type="GO" id="GO:0003735">
    <property type="term" value="F:structural constituent of ribosome"/>
    <property type="evidence" value="ECO:0007669"/>
    <property type="project" value="InterPro"/>
</dbReference>
<dbReference type="GO" id="GO:0006412">
    <property type="term" value="P:translation"/>
    <property type="evidence" value="ECO:0007669"/>
    <property type="project" value="UniProtKB-UniRule"/>
</dbReference>
<dbReference type="Gene3D" id="4.10.830.30">
    <property type="entry name" value="Ribosomal protein L31"/>
    <property type="match status" value="1"/>
</dbReference>
<dbReference type="HAMAP" id="MF_00501">
    <property type="entry name" value="Ribosomal_bL31_1"/>
    <property type="match status" value="1"/>
</dbReference>
<dbReference type="InterPro" id="IPR034704">
    <property type="entry name" value="Ribosomal_bL28/bL31-like_sf"/>
</dbReference>
<dbReference type="InterPro" id="IPR002150">
    <property type="entry name" value="Ribosomal_bL31"/>
</dbReference>
<dbReference type="InterPro" id="IPR027491">
    <property type="entry name" value="Ribosomal_bL31_A"/>
</dbReference>
<dbReference type="InterPro" id="IPR042105">
    <property type="entry name" value="Ribosomal_bL31_sf"/>
</dbReference>
<dbReference type="NCBIfam" id="TIGR00105">
    <property type="entry name" value="L31"/>
    <property type="match status" value="1"/>
</dbReference>
<dbReference type="NCBIfam" id="NF000612">
    <property type="entry name" value="PRK00019.1"/>
    <property type="match status" value="1"/>
</dbReference>
<dbReference type="NCBIfam" id="NF001809">
    <property type="entry name" value="PRK00528.1"/>
    <property type="match status" value="1"/>
</dbReference>
<dbReference type="PANTHER" id="PTHR33280">
    <property type="entry name" value="50S RIBOSOMAL PROTEIN L31, CHLOROPLASTIC"/>
    <property type="match status" value="1"/>
</dbReference>
<dbReference type="PANTHER" id="PTHR33280:SF6">
    <property type="entry name" value="LARGE RIBOSOMAL SUBUNIT PROTEIN BL31A"/>
    <property type="match status" value="1"/>
</dbReference>
<dbReference type="Pfam" id="PF01197">
    <property type="entry name" value="Ribosomal_L31"/>
    <property type="match status" value="1"/>
</dbReference>
<dbReference type="PRINTS" id="PR01249">
    <property type="entry name" value="RIBOSOMALL31"/>
</dbReference>
<dbReference type="SUPFAM" id="SSF143800">
    <property type="entry name" value="L28p-like"/>
    <property type="match status" value="1"/>
</dbReference>
<dbReference type="PROSITE" id="PS01143">
    <property type="entry name" value="RIBOSOMAL_L31"/>
    <property type="match status" value="1"/>
</dbReference>
<reference key="1">
    <citation type="journal article" date="2003" name="Proc. Natl. Acad. Sci. U.S.A.">
        <title>Complete genome sequence of the Q-fever pathogen, Coxiella burnetii.</title>
        <authorList>
            <person name="Seshadri R."/>
            <person name="Paulsen I.T."/>
            <person name="Eisen J.A."/>
            <person name="Read T.D."/>
            <person name="Nelson K.E."/>
            <person name="Nelson W.C."/>
            <person name="Ward N.L."/>
            <person name="Tettelin H."/>
            <person name="Davidsen T.M."/>
            <person name="Beanan M.J."/>
            <person name="DeBoy R.T."/>
            <person name="Daugherty S.C."/>
            <person name="Brinkac L.M."/>
            <person name="Madupu R."/>
            <person name="Dodson R.J."/>
            <person name="Khouri H.M."/>
            <person name="Lee K.H."/>
            <person name="Carty H.A."/>
            <person name="Scanlan D."/>
            <person name="Heinzen R.A."/>
            <person name="Thompson H.A."/>
            <person name="Samuel J.E."/>
            <person name="Fraser C.M."/>
            <person name="Heidelberg J.F."/>
        </authorList>
    </citation>
    <scope>NUCLEOTIDE SEQUENCE [LARGE SCALE GENOMIC DNA]</scope>
    <source>
        <strain>RSA 493 / Nine Mile phase I</strain>
    </source>
</reference>
<comment type="function">
    <text evidence="1">Binds the 23S rRNA.</text>
</comment>
<comment type="cofactor">
    <cofactor evidence="1">
        <name>Zn(2+)</name>
        <dbReference type="ChEBI" id="CHEBI:29105"/>
    </cofactor>
    <text evidence="1">Binds 1 zinc ion per subunit.</text>
</comment>
<comment type="subunit">
    <text evidence="1">Part of the 50S ribosomal subunit.</text>
</comment>
<comment type="similarity">
    <text evidence="1">Belongs to the bacterial ribosomal protein bL31 family. Type A subfamily.</text>
</comment>
<name>RL31_COXBU</name>
<organism>
    <name type="scientific">Coxiella burnetii (strain RSA 493 / Nine Mile phase I)</name>
    <dbReference type="NCBI Taxonomy" id="227377"/>
    <lineage>
        <taxon>Bacteria</taxon>
        <taxon>Pseudomonadati</taxon>
        <taxon>Pseudomonadota</taxon>
        <taxon>Gammaproteobacteria</taxon>
        <taxon>Legionellales</taxon>
        <taxon>Coxiellaceae</taxon>
        <taxon>Coxiella</taxon>
    </lineage>
</organism>
<protein>
    <recommendedName>
        <fullName evidence="1">Large ribosomal subunit protein bL31</fullName>
    </recommendedName>
    <alternativeName>
        <fullName evidence="2">50S ribosomal protein L31</fullName>
    </alternativeName>
</protein>
<proteinExistence type="inferred from homology"/>
<gene>
    <name evidence="1" type="primary">rpmE</name>
    <name type="ordered locus">CBU_0905</name>
</gene>
<keyword id="KW-0479">Metal-binding</keyword>
<keyword id="KW-1185">Reference proteome</keyword>
<keyword id="KW-0687">Ribonucleoprotein</keyword>
<keyword id="KW-0689">Ribosomal protein</keyword>
<keyword id="KW-0694">RNA-binding</keyword>
<keyword id="KW-0699">rRNA-binding</keyword>
<keyword id="KW-0862">Zinc</keyword>
<accession>Q83D39</accession>
<sequence>MKENIHPPYKQIKVTCSCGNTFMTGSTLDRELHLEICSACHPFYTGQQKMVDTAGRVERFRKKYAKRRAANASPEDEKK</sequence>
<feature type="chain" id="PRO_0000173098" description="Large ribosomal subunit protein bL31">
    <location>
        <begin position="1"/>
        <end position="79"/>
    </location>
</feature>
<feature type="binding site" evidence="1">
    <location>
        <position position="16"/>
    </location>
    <ligand>
        <name>Zn(2+)</name>
        <dbReference type="ChEBI" id="CHEBI:29105"/>
    </ligand>
</feature>
<feature type="binding site" evidence="1">
    <location>
        <position position="18"/>
    </location>
    <ligand>
        <name>Zn(2+)</name>
        <dbReference type="ChEBI" id="CHEBI:29105"/>
    </ligand>
</feature>
<feature type="binding site" evidence="1">
    <location>
        <position position="37"/>
    </location>
    <ligand>
        <name>Zn(2+)</name>
        <dbReference type="ChEBI" id="CHEBI:29105"/>
    </ligand>
</feature>
<feature type="binding site" evidence="1">
    <location>
        <position position="40"/>
    </location>
    <ligand>
        <name>Zn(2+)</name>
        <dbReference type="ChEBI" id="CHEBI:29105"/>
    </ligand>
</feature>